<comment type="function">
    <text evidence="1">Provides the (R)-glutamate required for cell wall biosynthesis.</text>
</comment>
<comment type="catalytic activity">
    <reaction evidence="1">
        <text>L-glutamate = D-glutamate</text>
        <dbReference type="Rhea" id="RHEA:12813"/>
        <dbReference type="ChEBI" id="CHEBI:29985"/>
        <dbReference type="ChEBI" id="CHEBI:29986"/>
        <dbReference type="EC" id="5.1.1.3"/>
    </reaction>
</comment>
<comment type="pathway">
    <text evidence="1">Cell wall biogenesis; peptidoglycan biosynthesis.</text>
</comment>
<comment type="similarity">
    <text evidence="1">Belongs to the aspartate/glutamate racemases family.</text>
</comment>
<feature type="chain" id="PRO_1000125602" description="Glutamate racemase">
    <location>
        <begin position="1"/>
        <end position="264"/>
    </location>
</feature>
<feature type="active site" description="Proton donor/acceptor" evidence="1">
    <location>
        <position position="74"/>
    </location>
</feature>
<feature type="active site" description="Proton donor/acceptor" evidence="1">
    <location>
        <position position="193"/>
    </location>
</feature>
<feature type="binding site" evidence="1">
    <location>
        <begin position="11"/>
        <end position="12"/>
    </location>
    <ligand>
        <name>substrate</name>
    </ligand>
</feature>
<feature type="binding site" evidence="1">
    <location>
        <begin position="43"/>
        <end position="44"/>
    </location>
    <ligand>
        <name>substrate</name>
    </ligand>
</feature>
<feature type="binding site" evidence="1">
    <location>
        <begin position="75"/>
        <end position="76"/>
    </location>
    <ligand>
        <name>substrate</name>
    </ligand>
</feature>
<feature type="binding site" evidence="1">
    <location>
        <begin position="194"/>
        <end position="195"/>
    </location>
    <ligand>
        <name>substrate</name>
    </ligand>
</feature>
<organism>
    <name type="scientific">Bifidobacterium longum subsp. infantis (strain ATCC 15697 / DSM 20088 / JCM 1222 / NCTC 11817 / S12)</name>
    <dbReference type="NCBI Taxonomy" id="391904"/>
    <lineage>
        <taxon>Bacteria</taxon>
        <taxon>Bacillati</taxon>
        <taxon>Actinomycetota</taxon>
        <taxon>Actinomycetes</taxon>
        <taxon>Bifidobacteriales</taxon>
        <taxon>Bifidobacteriaceae</taxon>
        <taxon>Bifidobacterium</taxon>
    </lineage>
</organism>
<gene>
    <name evidence="1" type="primary">murI</name>
    <name type="ordered locus">Blon_0768</name>
    <name type="ordered locus">BLIJ_0783</name>
</gene>
<sequence>MSSSAPIGVFDSGLGGISVARQIAKDMPAEHVLYFGDSANAPYGIKTPEQVRALSFDIVERFVRQGVKAVVIACNTATSAAVNDLREHYDIPIIGMEPALKVACDRGDVPSDPHHIPQRVIVAATPLTLRERKFATLMDRFDSQNTIFKEPCPDLVEIVESGRLGDHDLVMRTLHGYFDQYDMEHIDSVVLGCTHFVFYRDYFRELLPERAAVIDGNEGTVRHLGVVLESLGKLAPEGATGGVELANSDPSERIAELSRKLLNV</sequence>
<reference key="1">
    <citation type="journal article" date="2008" name="Proc. Natl. Acad. Sci. U.S.A.">
        <title>The genome sequence of Bifidobacterium longum subsp. infantis reveals adaptations for milk utilization within the infant microbiome.</title>
        <authorList>
            <person name="Sela D.A."/>
            <person name="Chapman J."/>
            <person name="Adeuya A."/>
            <person name="Kim J.H."/>
            <person name="Chen F."/>
            <person name="Whitehead T.R."/>
            <person name="Lapidus A."/>
            <person name="Rokhsar D.S."/>
            <person name="Lebrilla C.B."/>
            <person name="German J.B."/>
            <person name="Price N.P."/>
            <person name="Richardson P.M."/>
            <person name="Mills D.A."/>
        </authorList>
    </citation>
    <scope>NUCLEOTIDE SEQUENCE [LARGE SCALE GENOMIC DNA]</scope>
    <source>
        <strain>ATCC 15697 / DSM 20088 / JCM 1222 / NCTC 11817 / S12</strain>
    </source>
</reference>
<reference key="2">
    <citation type="journal article" date="2011" name="Nature">
        <title>Bifidobacteria can protect from enteropathogenic infection through production of acetate.</title>
        <authorList>
            <person name="Fukuda S."/>
            <person name="Toh H."/>
            <person name="Hase K."/>
            <person name="Oshima K."/>
            <person name="Nakanishi Y."/>
            <person name="Yoshimura K."/>
            <person name="Tobe T."/>
            <person name="Clarke J.M."/>
            <person name="Topping D.L."/>
            <person name="Suzuki T."/>
            <person name="Taylor T.D."/>
            <person name="Itoh K."/>
            <person name="Kikuchi J."/>
            <person name="Morita H."/>
            <person name="Hattori M."/>
            <person name="Ohno H."/>
        </authorList>
    </citation>
    <scope>NUCLEOTIDE SEQUENCE [LARGE SCALE GENOMIC DNA]</scope>
    <source>
        <strain>ATCC 15697 / DSM 20088 / JCM 1222 / NCTC 11817 / S12</strain>
    </source>
</reference>
<accession>B7GPZ1</accession>
<accession>E8MQV0</accession>
<keyword id="KW-0133">Cell shape</keyword>
<keyword id="KW-0961">Cell wall biogenesis/degradation</keyword>
<keyword id="KW-0413">Isomerase</keyword>
<keyword id="KW-0573">Peptidoglycan synthesis</keyword>
<dbReference type="EC" id="5.1.1.3" evidence="1"/>
<dbReference type="EMBL" id="CP001095">
    <property type="protein sequence ID" value="ACJ51871.1"/>
    <property type="molecule type" value="Genomic_DNA"/>
</dbReference>
<dbReference type="EMBL" id="AP010889">
    <property type="protein sequence ID" value="BAJ68375.1"/>
    <property type="molecule type" value="Genomic_DNA"/>
</dbReference>
<dbReference type="RefSeq" id="WP_012577153.1">
    <property type="nucleotide sequence ID" value="NZ_JDTT01000007.1"/>
</dbReference>
<dbReference type="SMR" id="B7GPZ1"/>
<dbReference type="KEGG" id="bln:Blon_0768"/>
<dbReference type="KEGG" id="blon:BLIJ_0783"/>
<dbReference type="PATRIC" id="fig|391904.8.peg.789"/>
<dbReference type="HOGENOM" id="CLU_052344_1_0_11"/>
<dbReference type="UniPathway" id="UPA00219"/>
<dbReference type="Proteomes" id="UP000001360">
    <property type="component" value="Chromosome"/>
</dbReference>
<dbReference type="GO" id="GO:0008881">
    <property type="term" value="F:glutamate racemase activity"/>
    <property type="evidence" value="ECO:0007669"/>
    <property type="project" value="UniProtKB-UniRule"/>
</dbReference>
<dbReference type="GO" id="GO:0071555">
    <property type="term" value="P:cell wall organization"/>
    <property type="evidence" value="ECO:0007669"/>
    <property type="project" value="UniProtKB-KW"/>
</dbReference>
<dbReference type="GO" id="GO:0009252">
    <property type="term" value="P:peptidoglycan biosynthetic process"/>
    <property type="evidence" value="ECO:0007669"/>
    <property type="project" value="UniProtKB-UniRule"/>
</dbReference>
<dbReference type="GO" id="GO:0008360">
    <property type="term" value="P:regulation of cell shape"/>
    <property type="evidence" value="ECO:0007669"/>
    <property type="project" value="UniProtKB-KW"/>
</dbReference>
<dbReference type="Gene3D" id="3.40.50.1860">
    <property type="match status" value="2"/>
</dbReference>
<dbReference type="HAMAP" id="MF_00258">
    <property type="entry name" value="Glu_racemase"/>
    <property type="match status" value="1"/>
</dbReference>
<dbReference type="InterPro" id="IPR015942">
    <property type="entry name" value="Asp/Glu/hydantoin_racemase"/>
</dbReference>
<dbReference type="InterPro" id="IPR001920">
    <property type="entry name" value="Asp/Glu_race"/>
</dbReference>
<dbReference type="InterPro" id="IPR018187">
    <property type="entry name" value="Asp/Glu_racemase_AS_1"/>
</dbReference>
<dbReference type="InterPro" id="IPR004391">
    <property type="entry name" value="Glu_race"/>
</dbReference>
<dbReference type="NCBIfam" id="TIGR00067">
    <property type="entry name" value="glut_race"/>
    <property type="match status" value="1"/>
</dbReference>
<dbReference type="PANTHER" id="PTHR21198">
    <property type="entry name" value="GLUTAMATE RACEMASE"/>
    <property type="match status" value="1"/>
</dbReference>
<dbReference type="PANTHER" id="PTHR21198:SF3">
    <property type="entry name" value="GLUTAMATE RACEMASE"/>
    <property type="match status" value="1"/>
</dbReference>
<dbReference type="Pfam" id="PF01177">
    <property type="entry name" value="Asp_Glu_race"/>
    <property type="match status" value="1"/>
</dbReference>
<dbReference type="SUPFAM" id="SSF53681">
    <property type="entry name" value="Aspartate/glutamate racemase"/>
    <property type="match status" value="2"/>
</dbReference>
<dbReference type="PROSITE" id="PS00923">
    <property type="entry name" value="ASP_GLU_RACEMASE_1"/>
    <property type="match status" value="1"/>
</dbReference>
<name>MURI_BIFLS</name>
<proteinExistence type="inferred from homology"/>
<protein>
    <recommendedName>
        <fullName evidence="1">Glutamate racemase</fullName>
        <ecNumber evidence="1">5.1.1.3</ecNumber>
    </recommendedName>
</protein>
<evidence type="ECO:0000255" key="1">
    <source>
        <dbReference type="HAMAP-Rule" id="MF_00258"/>
    </source>
</evidence>